<evidence type="ECO:0000250" key="1"/>
<evidence type="ECO:0000250" key="2">
    <source>
        <dbReference type="UniProtKB" id="P48745"/>
    </source>
</evidence>
<evidence type="ECO:0000250" key="3">
    <source>
        <dbReference type="UniProtKB" id="Q64299"/>
    </source>
</evidence>
<evidence type="ECO:0000250" key="4">
    <source>
        <dbReference type="UniProtKB" id="Q9QZQ5"/>
    </source>
</evidence>
<evidence type="ECO:0000255" key="5"/>
<evidence type="ECO:0000255" key="6">
    <source>
        <dbReference type="PROSITE-ProRule" id="PRU00039"/>
    </source>
</evidence>
<evidence type="ECO:0000255" key="7">
    <source>
        <dbReference type="PROSITE-ProRule" id="PRU00210"/>
    </source>
</evidence>
<evidence type="ECO:0000255" key="8">
    <source>
        <dbReference type="PROSITE-ProRule" id="PRU00220"/>
    </source>
</evidence>
<evidence type="ECO:0000255" key="9">
    <source>
        <dbReference type="PROSITE-ProRule" id="PRU00653"/>
    </source>
</evidence>
<evidence type="ECO:0000305" key="10"/>
<keyword id="KW-0965">Cell junction</keyword>
<keyword id="KW-0963">Cytoplasm</keyword>
<keyword id="KW-1015">Disulfide bond</keyword>
<keyword id="KW-0303">Gap junction</keyword>
<keyword id="KW-0325">Glycoprotein</keyword>
<keyword id="KW-0339">Growth factor</keyword>
<keyword id="KW-1185">Reference proteome</keyword>
<keyword id="KW-0964">Secreted</keyword>
<keyword id="KW-0732">Signal</keyword>
<dbReference type="EMBL" id="U37063">
    <property type="protein sequence ID" value="AAB17096.1"/>
    <property type="molecule type" value="mRNA"/>
</dbReference>
<dbReference type="RefSeq" id="NP_001079127.1">
    <property type="nucleotide sequence ID" value="NM_001085658.1"/>
</dbReference>
<dbReference type="SMR" id="P51609"/>
<dbReference type="GlyCosmos" id="P51609">
    <property type="glycosylation" value="1 site, No reported glycans"/>
</dbReference>
<dbReference type="GeneID" id="373662"/>
<dbReference type="KEGG" id="xla:373662"/>
<dbReference type="AGR" id="Xenbase:XB-GENE-1013047"/>
<dbReference type="CTD" id="373662"/>
<dbReference type="Xenbase" id="XB-GENE-1013047">
    <property type="gene designation" value="ccn3.L"/>
</dbReference>
<dbReference type="OrthoDB" id="365605at2759"/>
<dbReference type="Proteomes" id="UP000186698">
    <property type="component" value="Chromosome 6L"/>
</dbReference>
<dbReference type="Bgee" id="373662">
    <property type="expression patterns" value="Expressed in testis and 17 other cell types or tissues"/>
</dbReference>
<dbReference type="GO" id="GO:0005737">
    <property type="term" value="C:cytoplasm"/>
    <property type="evidence" value="ECO:0007669"/>
    <property type="project" value="UniProtKB-SubCell"/>
</dbReference>
<dbReference type="GO" id="GO:0031012">
    <property type="term" value="C:extracellular matrix"/>
    <property type="evidence" value="ECO:0000318"/>
    <property type="project" value="GO_Central"/>
</dbReference>
<dbReference type="GO" id="GO:0005615">
    <property type="term" value="C:extracellular space"/>
    <property type="evidence" value="ECO:0000318"/>
    <property type="project" value="GO_Central"/>
</dbReference>
<dbReference type="GO" id="GO:0005921">
    <property type="term" value="C:gap junction"/>
    <property type="evidence" value="ECO:0007669"/>
    <property type="project" value="UniProtKB-SubCell"/>
</dbReference>
<dbReference type="GO" id="GO:0008083">
    <property type="term" value="F:growth factor activity"/>
    <property type="evidence" value="ECO:0007669"/>
    <property type="project" value="UniProtKB-KW"/>
</dbReference>
<dbReference type="GO" id="GO:0008201">
    <property type="term" value="F:heparin binding"/>
    <property type="evidence" value="ECO:0000318"/>
    <property type="project" value="GO_Central"/>
</dbReference>
<dbReference type="GO" id="GO:0005178">
    <property type="term" value="F:integrin binding"/>
    <property type="evidence" value="ECO:0000318"/>
    <property type="project" value="GO_Central"/>
</dbReference>
<dbReference type="GO" id="GO:0007155">
    <property type="term" value="P:cell adhesion"/>
    <property type="evidence" value="ECO:0000318"/>
    <property type="project" value="GO_Central"/>
</dbReference>
<dbReference type="GO" id="GO:0002062">
    <property type="term" value="P:chondrocyte differentiation"/>
    <property type="evidence" value="ECO:0000318"/>
    <property type="project" value="GO_Central"/>
</dbReference>
<dbReference type="GO" id="GO:0045597">
    <property type="term" value="P:positive regulation of cell differentiation"/>
    <property type="evidence" value="ECO:0000318"/>
    <property type="project" value="GO_Central"/>
</dbReference>
<dbReference type="GO" id="GO:0007165">
    <property type="term" value="P:signal transduction"/>
    <property type="evidence" value="ECO:0000318"/>
    <property type="project" value="GO_Central"/>
</dbReference>
<dbReference type="FunFam" id="2.20.100.10:FF:000046">
    <property type="entry name" value="Cellular communication network factor 4"/>
    <property type="match status" value="1"/>
</dbReference>
<dbReference type="Gene3D" id="2.10.70.10">
    <property type="entry name" value="Complement Module, domain 1"/>
    <property type="match status" value="1"/>
</dbReference>
<dbReference type="Gene3D" id="2.20.100.10">
    <property type="entry name" value="Thrombospondin type-1 (TSP1) repeat"/>
    <property type="match status" value="1"/>
</dbReference>
<dbReference type="InterPro" id="IPR050941">
    <property type="entry name" value="CCN"/>
</dbReference>
<dbReference type="InterPro" id="IPR006207">
    <property type="entry name" value="Cys_knot_C"/>
</dbReference>
<dbReference type="InterPro" id="IPR006208">
    <property type="entry name" value="Glyco_hormone_CN"/>
</dbReference>
<dbReference type="InterPro" id="IPR009030">
    <property type="entry name" value="Growth_fac_rcpt_cys_sf"/>
</dbReference>
<dbReference type="InterPro" id="IPR000867">
    <property type="entry name" value="IGFBP-like"/>
</dbReference>
<dbReference type="InterPro" id="IPR012395">
    <property type="entry name" value="IGFBP_CNN"/>
</dbReference>
<dbReference type="InterPro" id="IPR017891">
    <property type="entry name" value="Insulin_GF-bd_Cys-rich_CS"/>
</dbReference>
<dbReference type="InterPro" id="IPR043973">
    <property type="entry name" value="TSP1_CCN"/>
</dbReference>
<dbReference type="InterPro" id="IPR000884">
    <property type="entry name" value="TSP1_rpt"/>
</dbReference>
<dbReference type="InterPro" id="IPR036383">
    <property type="entry name" value="TSP1_rpt_sf"/>
</dbReference>
<dbReference type="InterPro" id="IPR001007">
    <property type="entry name" value="VWF_dom"/>
</dbReference>
<dbReference type="PANTHER" id="PTHR11348:SF8">
    <property type="entry name" value="CCN FAMILY MEMBER 3"/>
    <property type="match status" value="1"/>
</dbReference>
<dbReference type="PANTHER" id="PTHR11348">
    <property type="entry name" value="CONNECTIVE TISSUE GROWTH FACTOR-RELATED"/>
    <property type="match status" value="1"/>
</dbReference>
<dbReference type="Pfam" id="PF00007">
    <property type="entry name" value="Cys_knot"/>
    <property type="match status" value="1"/>
</dbReference>
<dbReference type="Pfam" id="PF00219">
    <property type="entry name" value="IGFBP"/>
    <property type="match status" value="1"/>
</dbReference>
<dbReference type="Pfam" id="PF19035">
    <property type="entry name" value="TSP1_CCN"/>
    <property type="match status" value="1"/>
</dbReference>
<dbReference type="Pfam" id="PF00093">
    <property type="entry name" value="VWC"/>
    <property type="match status" value="1"/>
</dbReference>
<dbReference type="PIRSF" id="PIRSF036495">
    <property type="entry name" value="IGFBP_rP_CNN"/>
    <property type="match status" value="1"/>
</dbReference>
<dbReference type="SMART" id="SM00041">
    <property type="entry name" value="CT"/>
    <property type="match status" value="1"/>
</dbReference>
<dbReference type="SMART" id="SM00121">
    <property type="entry name" value="IB"/>
    <property type="match status" value="1"/>
</dbReference>
<dbReference type="SMART" id="SM00209">
    <property type="entry name" value="TSP1"/>
    <property type="match status" value="1"/>
</dbReference>
<dbReference type="SMART" id="SM00214">
    <property type="entry name" value="VWC"/>
    <property type="match status" value="1"/>
</dbReference>
<dbReference type="SUPFAM" id="SSF57184">
    <property type="entry name" value="Growth factor receptor domain"/>
    <property type="match status" value="1"/>
</dbReference>
<dbReference type="SUPFAM" id="SSF82895">
    <property type="entry name" value="TSP-1 type 1 repeat"/>
    <property type="match status" value="1"/>
</dbReference>
<dbReference type="PROSITE" id="PS01225">
    <property type="entry name" value="CTCK_2"/>
    <property type="match status" value="1"/>
</dbReference>
<dbReference type="PROSITE" id="PS00222">
    <property type="entry name" value="IGFBP_N_1"/>
    <property type="match status" value="1"/>
</dbReference>
<dbReference type="PROSITE" id="PS51323">
    <property type="entry name" value="IGFBP_N_2"/>
    <property type="match status" value="1"/>
</dbReference>
<dbReference type="PROSITE" id="PS50092">
    <property type="entry name" value="TSP1"/>
    <property type="match status" value="1"/>
</dbReference>
<dbReference type="PROSITE" id="PS01208">
    <property type="entry name" value="VWFC_1"/>
    <property type="match status" value="1"/>
</dbReference>
<dbReference type="PROSITE" id="PS50184">
    <property type="entry name" value="VWFC_2"/>
    <property type="match status" value="1"/>
</dbReference>
<reference key="1">
    <citation type="journal article" date="1996" name="Gene">
        <title>Isolation and characterization of xnov, a Xenopus laevis ortholog of the chicken nov gene.</title>
        <authorList>
            <person name="Ying Z."/>
            <person name="King M.L."/>
        </authorList>
    </citation>
    <scope>NUCLEOTIDE SEQUENCE [MRNA]</scope>
</reference>
<gene>
    <name type="primary">ccn3</name>
    <name type="synonym">nov</name>
</gene>
<accession>P51609</accession>
<proteinExistence type="evidence at transcript level"/>
<comment type="function">
    <text evidence="2 3 4">Immediate-early protein playing a role in various cellular processes including proliferation, adhesion, migration, differentiation and survival. Acts by binding to integrins or membrane receptors such as NOTCH1.</text>
</comment>
<comment type="subcellular location">
    <subcellularLocation>
        <location evidence="2">Secreted</location>
    </subcellularLocation>
    <subcellularLocation>
        <location evidence="2">Cytoplasm</location>
    </subcellularLocation>
    <subcellularLocation>
        <location evidence="2">Cell junction</location>
        <location evidence="2">Gap junction</location>
    </subcellularLocation>
</comment>
<comment type="similarity">
    <text evidence="10">Belongs to the CCN family.</text>
</comment>
<sequence length="343" mass="38070">MTPHLALCFILLIQQVASQKCPSQCDQCPEEPPSCAPSVLLILDGCGCCPVCARQEGESCSHLNPCQEDKGLYCEFNADPRMETGTCMALEGNSCVFDGVVYRNRESFQPSCKYHCTCLNGHIGCVPRCNLDLLLPGPDCPFPRRVKVPGECCEKWVCDSKEEMAIGGFAMAAYRPEATLGIDASDTSFACIAQTTEWSACSKTCGMGVSSRVTNRNARCEMQKQIRLCMVRSCEEEPGWHVEKKGKKCVRVRKTTKPIHFHYKNCTSVQPYKPKFCGQCSDGRCCTPHSTKTMHVEFVCPQKRIVKKPVMVISTCVCHYNCPQDSSLLQVENARFPGLKTNL</sequence>
<feature type="signal peptide" evidence="5">
    <location>
        <begin position="1"/>
        <end position="18"/>
    </location>
</feature>
<feature type="chain" id="PRO_0000014418" description="CCN family member 3">
    <location>
        <begin position="19"/>
        <end position="343"/>
    </location>
</feature>
<feature type="domain" description="IGFBP N-terminal" evidence="9">
    <location>
        <begin position="19"/>
        <end position="90"/>
    </location>
</feature>
<feature type="domain" description="VWFC" evidence="8">
    <location>
        <begin position="93"/>
        <end position="159"/>
    </location>
</feature>
<feature type="domain" description="TSP type-1" evidence="7">
    <location>
        <begin position="190"/>
        <end position="235"/>
    </location>
</feature>
<feature type="domain" description="CTCK" evidence="6">
    <location>
        <begin position="249"/>
        <end position="323"/>
    </location>
</feature>
<feature type="glycosylation site" description="N-linked (GlcNAc...) asparagine" evidence="5">
    <location>
        <position position="265"/>
    </location>
</feature>
<feature type="disulfide bond" evidence="9">
    <location>
        <begin position="21"/>
        <end position="46"/>
    </location>
</feature>
<feature type="disulfide bond" evidence="9">
    <location>
        <begin position="25"/>
        <end position="48"/>
    </location>
</feature>
<feature type="disulfide bond" evidence="9">
    <location>
        <begin position="28"/>
        <end position="49"/>
    </location>
</feature>
<feature type="disulfide bond" evidence="9">
    <location>
        <begin position="35"/>
        <end position="52"/>
    </location>
</feature>
<feature type="disulfide bond" evidence="9">
    <location>
        <begin position="60"/>
        <end position="74"/>
    </location>
</feature>
<feature type="disulfide bond" evidence="9">
    <location>
        <begin position="66"/>
        <end position="87"/>
    </location>
</feature>
<feature type="disulfide bond" evidence="1">
    <location>
        <begin position="249"/>
        <end position="286"/>
    </location>
</feature>
<feature type="disulfide bond" evidence="1">
    <location>
        <begin position="266"/>
        <end position="300"/>
    </location>
</feature>
<feature type="disulfide bond" evidence="1">
    <location>
        <begin position="277"/>
        <end position="316"/>
    </location>
</feature>
<feature type="disulfide bond" evidence="1">
    <location>
        <begin position="280"/>
        <end position="318"/>
    </location>
</feature>
<feature type="disulfide bond" evidence="1">
    <location>
        <begin position="285"/>
        <end position="322"/>
    </location>
</feature>
<name>CCN3_XENLA</name>
<protein>
    <recommendedName>
        <fullName>CCN family member 3</fullName>
    </recommendedName>
    <alternativeName>
        <fullName evidence="2">Cellular communication network factor 3</fullName>
    </alternativeName>
    <alternativeName>
        <fullName>Protein NOV homolog</fullName>
        <shortName>Xnov</shortName>
    </alternativeName>
</protein>
<organism>
    <name type="scientific">Xenopus laevis</name>
    <name type="common">African clawed frog</name>
    <dbReference type="NCBI Taxonomy" id="8355"/>
    <lineage>
        <taxon>Eukaryota</taxon>
        <taxon>Metazoa</taxon>
        <taxon>Chordata</taxon>
        <taxon>Craniata</taxon>
        <taxon>Vertebrata</taxon>
        <taxon>Euteleostomi</taxon>
        <taxon>Amphibia</taxon>
        <taxon>Batrachia</taxon>
        <taxon>Anura</taxon>
        <taxon>Pipoidea</taxon>
        <taxon>Pipidae</taxon>
        <taxon>Xenopodinae</taxon>
        <taxon>Xenopus</taxon>
        <taxon>Xenopus</taxon>
    </lineage>
</organism>